<evidence type="ECO:0000250" key="1"/>
<evidence type="ECO:0000255" key="2"/>
<evidence type="ECO:0000255" key="3">
    <source>
        <dbReference type="PROSITE-ProRule" id="PRU01172"/>
    </source>
</evidence>
<evidence type="ECO:0000269" key="4">
    <source>
    </source>
</evidence>
<evidence type="ECO:0000305" key="5"/>
<accession>Q8R1M8</accession>
<accession>Q9D8J8</accession>
<name>MPTX_MOUSE</name>
<proteinExistence type="evidence at transcript level"/>
<sequence length="219" mass="24538">MEKLIVGILFLSVLSGSVAQTDMKGKAFIFPQESSTAYVSLIPKVRKSLQNFTLCMKAFTDLTRPYSIFSYNTRTKDNEILLFVENIGEYMFYVGNLVAIFKAPTNLPDPVRICVNWESVSGIAEFWLNGKPLGRKGLNKGYTVGGDAMIIIGQEQDSFGGNFDAKQSFVGEIWDVSLWDHVVPLEKVSDSCNNGNLINWQALNYEDNGYVVIKPKLWP</sequence>
<comment type="cofactor">
    <cofactor evidence="1">
        <name>Ca(2+)</name>
        <dbReference type="ChEBI" id="CHEBI:29108"/>
    </cofactor>
    <text evidence="1">Binds 2 calcium ions per subunit.</text>
</comment>
<comment type="subunit">
    <text evidence="1">Homopentamer. Pentraxin (or pentaxin) have a discoid arrangement of 5 non-covalently bound subunits (By similarity).</text>
</comment>
<comment type="subcellular location">
    <subcellularLocation>
        <location evidence="1">Secreted</location>
    </subcellularLocation>
</comment>
<comment type="tissue specificity">
    <text evidence="4">Expressed in colon.</text>
</comment>
<comment type="similarity">
    <text evidence="5">Belongs to the pentraxin family.</text>
</comment>
<dbReference type="EMBL" id="AK007963">
    <property type="protein sequence ID" value="BAB25374.1"/>
    <property type="molecule type" value="mRNA"/>
</dbReference>
<dbReference type="EMBL" id="BC024348">
    <property type="protein sequence ID" value="AAH24348.1"/>
    <property type="molecule type" value="mRNA"/>
</dbReference>
<dbReference type="RefSeq" id="NP_079746.1">
    <property type="nucleotide sequence ID" value="NM_025470.3"/>
</dbReference>
<dbReference type="SMR" id="Q8R1M8"/>
<dbReference type="FunCoup" id="Q8R1M8">
    <property type="interactions" value="363"/>
</dbReference>
<dbReference type="STRING" id="10090.ENSMUSP00000027816"/>
<dbReference type="GlyCosmos" id="Q8R1M8">
    <property type="glycosylation" value="1 site, No reported glycans"/>
</dbReference>
<dbReference type="GlyGen" id="Q8R1M8">
    <property type="glycosylation" value="1 site"/>
</dbReference>
<dbReference type="PaxDb" id="10090-ENSMUSP00000027816"/>
<dbReference type="ProteomicsDB" id="291397"/>
<dbReference type="DNASU" id="66289"/>
<dbReference type="GeneID" id="66289"/>
<dbReference type="KEGG" id="mmu:66289"/>
<dbReference type="AGR" id="MGI:1913539"/>
<dbReference type="CTD" id="649458"/>
<dbReference type="MGI" id="MGI:1913539">
    <property type="gene designation" value="Mptx1"/>
</dbReference>
<dbReference type="eggNOG" id="ENOG502S201">
    <property type="taxonomic scope" value="Eukaryota"/>
</dbReference>
<dbReference type="InParanoid" id="Q8R1M8"/>
<dbReference type="OrthoDB" id="547680at2759"/>
<dbReference type="PhylomeDB" id="Q8R1M8"/>
<dbReference type="TreeFam" id="TF330208"/>
<dbReference type="BioGRID-ORCS" id="66289">
    <property type="hits" value="2 hits in 77 CRISPR screens"/>
</dbReference>
<dbReference type="PRO" id="PR:Q8R1M8"/>
<dbReference type="Proteomes" id="UP000000589">
    <property type="component" value="Unplaced"/>
</dbReference>
<dbReference type="RNAct" id="Q8R1M8">
    <property type="molecule type" value="protein"/>
</dbReference>
<dbReference type="GO" id="GO:0005576">
    <property type="term" value="C:extracellular region"/>
    <property type="evidence" value="ECO:0007669"/>
    <property type="project" value="UniProtKB-SubCell"/>
</dbReference>
<dbReference type="GO" id="GO:0046872">
    <property type="term" value="F:metal ion binding"/>
    <property type="evidence" value="ECO:0007669"/>
    <property type="project" value="UniProtKB-KW"/>
</dbReference>
<dbReference type="CDD" id="cd00152">
    <property type="entry name" value="PTX"/>
    <property type="match status" value="1"/>
</dbReference>
<dbReference type="FunFam" id="2.60.120.200:FF:000070">
    <property type="entry name" value="Serum amyloid P-component"/>
    <property type="match status" value="1"/>
</dbReference>
<dbReference type="Gene3D" id="2.60.120.200">
    <property type="match status" value="1"/>
</dbReference>
<dbReference type="InterPro" id="IPR013320">
    <property type="entry name" value="ConA-like_dom_sf"/>
</dbReference>
<dbReference type="InterPro" id="IPR001759">
    <property type="entry name" value="Pentraxin-related"/>
</dbReference>
<dbReference type="InterPro" id="IPR051005">
    <property type="entry name" value="Pentraxin_domain"/>
</dbReference>
<dbReference type="PANTHER" id="PTHR45869">
    <property type="entry name" value="C-REACTIVE PROTEIN-RELATED"/>
    <property type="match status" value="1"/>
</dbReference>
<dbReference type="PANTHER" id="PTHR45869:SF6">
    <property type="entry name" value="MUCOSAL PENTRAXIN-RELATED"/>
    <property type="match status" value="1"/>
</dbReference>
<dbReference type="Pfam" id="PF00354">
    <property type="entry name" value="Pentaxin"/>
    <property type="match status" value="1"/>
</dbReference>
<dbReference type="PRINTS" id="PR00895">
    <property type="entry name" value="PENTAXIN"/>
</dbReference>
<dbReference type="SMART" id="SM00159">
    <property type="entry name" value="PTX"/>
    <property type="match status" value="1"/>
</dbReference>
<dbReference type="SUPFAM" id="SSF49899">
    <property type="entry name" value="Concanavalin A-like lectins/glucanases"/>
    <property type="match status" value="1"/>
</dbReference>
<dbReference type="PROSITE" id="PS51828">
    <property type="entry name" value="PTX_2"/>
    <property type="match status" value="1"/>
</dbReference>
<reference key="1">
    <citation type="journal article" date="2005" name="Science">
        <title>The transcriptional landscape of the mammalian genome.</title>
        <authorList>
            <person name="Carninci P."/>
            <person name="Kasukawa T."/>
            <person name="Katayama S."/>
            <person name="Gough J."/>
            <person name="Frith M.C."/>
            <person name="Maeda N."/>
            <person name="Oyama R."/>
            <person name="Ravasi T."/>
            <person name="Lenhard B."/>
            <person name="Wells C."/>
            <person name="Kodzius R."/>
            <person name="Shimokawa K."/>
            <person name="Bajic V.B."/>
            <person name="Brenner S.E."/>
            <person name="Batalov S."/>
            <person name="Forrest A.R."/>
            <person name="Zavolan M."/>
            <person name="Davis M.J."/>
            <person name="Wilming L.G."/>
            <person name="Aidinis V."/>
            <person name="Allen J.E."/>
            <person name="Ambesi-Impiombato A."/>
            <person name="Apweiler R."/>
            <person name="Aturaliya R.N."/>
            <person name="Bailey T.L."/>
            <person name="Bansal M."/>
            <person name="Baxter L."/>
            <person name="Beisel K.W."/>
            <person name="Bersano T."/>
            <person name="Bono H."/>
            <person name="Chalk A.M."/>
            <person name="Chiu K.P."/>
            <person name="Choudhary V."/>
            <person name="Christoffels A."/>
            <person name="Clutterbuck D.R."/>
            <person name="Crowe M.L."/>
            <person name="Dalla E."/>
            <person name="Dalrymple B.P."/>
            <person name="de Bono B."/>
            <person name="Della Gatta G."/>
            <person name="di Bernardo D."/>
            <person name="Down T."/>
            <person name="Engstrom P."/>
            <person name="Fagiolini M."/>
            <person name="Faulkner G."/>
            <person name="Fletcher C.F."/>
            <person name="Fukushima T."/>
            <person name="Furuno M."/>
            <person name="Futaki S."/>
            <person name="Gariboldi M."/>
            <person name="Georgii-Hemming P."/>
            <person name="Gingeras T.R."/>
            <person name="Gojobori T."/>
            <person name="Green R.E."/>
            <person name="Gustincich S."/>
            <person name="Harbers M."/>
            <person name="Hayashi Y."/>
            <person name="Hensch T.K."/>
            <person name="Hirokawa N."/>
            <person name="Hill D."/>
            <person name="Huminiecki L."/>
            <person name="Iacono M."/>
            <person name="Ikeo K."/>
            <person name="Iwama A."/>
            <person name="Ishikawa T."/>
            <person name="Jakt M."/>
            <person name="Kanapin A."/>
            <person name="Katoh M."/>
            <person name="Kawasawa Y."/>
            <person name="Kelso J."/>
            <person name="Kitamura H."/>
            <person name="Kitano H."/>
            <person name="Kollias G."/>
            <person name="Krishnan S.P."/>
            <person name="Kruger A."/>
            <person name="Kummerfeld S.K."/>
            <person name="Kurochkin I.V."/>
            <person name="Lareau L.F."/>
            <person name="Lazarevic D."/>
            <person name="Lipovich L."/>
            <person name="Liu J."/>
            <person name="Liuni S."/>
            <person name="McWilliam S."/>
            <person name="Madan Babu M."/>
            <person name="Madera M."/>
            <person name="Marchionni L."/>
            <person name="Matsuda H."/>
            <person name="Matsuzawa S."/>
            <person name="Miki H."/>
            <person name="Mignone F."/>
            <person name="Miyake S."/>
            <person name="Morris K."/>
            <person name="Mottagui-Tabar S."/>
            <person name="Mulder N."/>
            <person name="Nakano N."/>
            <person name="Nakauchi H."/>
            <person name="Ng P."/>
            <person name="Nilsson R."/>
            <person name="Nishiguchi S."/>
            <person name="Nishikawa S."/>
            <person name="Nori F."/>
            <person name="Ohara O."/>
            <person name="Okazaki Y."/>
            <person name="Orlando V."/>
            <person name="Pang K.C."/>
            <person name="Pavan W.J."/>
            <person name="Pavesi G."/>
            <person name="Pesole G."/>
            <person name="Petrovsky N."/>
            <person name="Piazza S."/>
            <person name="Reed J."/>
            <person name="Reid J.F."/>
            <person name="Ring B.Z."/>
            <person name="Ringwald M."/>
            <person name="Rost B."/>
            <person name="Ruan Y."/>
            <person name="Salzberg S.L."/>
            <person name="Sandelin A."/>
            <person name="Schneider C."/>
            <person name="Schoenbach C."/>
            <person name="Sekiguchi K."/>
            <person name="Semple C.A."/>
            <person name="Seno S."/>
            <person name="Sessa L."/>
            <person name="Sheng Y."/>
            <person name="Shibata Y."/>
            <person name="Shimada H."/>
            <person name="Shimada K."/>
            <person name="Silva D."/>
            <person name="Sinclair B."/>
            <person name="Sperling S."/>
            <person name="Stupka E."/>
            <person name="Sugiura K."/>
            <person name="Sultana R."/>
            <person name="Takenaka Y."/>
            <person name="Taki K."/>
            <person name="Tammoja K."/>
            <person name="Tan S.L."/>
            <person name="Tang S."/>
            <person name="Taylor M.S."/>
            <person name="Tegner J."/>
            <person name="Teichmann S.A."/>
            <person name="Ueda H.R."/>
            <person name="van Nimwegen E."/>
            <person name="Verardo R."/>
            <person name="Wei C.L."/>
            <person name="Yagi K."/>
            <person name="Yamanishi H."/>
            <person name="Zabarovsky E."/>
            <person name="Zhu S."/>
            <person name="Zimmer A."/>
            <person name="Hide W."/>
            <person name="Bult C."/>
            <person name="Grimmond S.M."/>
            <person name="Teasdale R.D."/>
            <person name="Liu E.T."/>
            <person name="Brusic V."/>
            <person name="Quackenbush J."/>
            <person name="Wahlestedt C."/>
            <person name="Mattick J.S."/>
            <person name="Hume D.A."/>
            <person name="Kai C."/>
            <person name="Sasaki D."/>
            <person name="Tomaru Y."/>
            <person name="Fukuda S."/>
            <person name="Kanamori-Katayama M."/>
            <person name="Suzuki M."/>
            <person name="Aoki J."/>
            <person name="Arakawa T."/>
            <person name="Iida J."/>
            <person name="Imamura K."/>
            <person name="Itoh M."/>
            <person name="Kato T."/>
            <person name="Kawaji H."/>
            <person name="Kawagashira N."/>
            <person name="Kawashima T."/>
            <person name="Kojima M."/>
            <person name="Kondo S."/>
            <person name="Konno H."/>
            <person name="Nakano K."/>
            <person name="Ninomiya N."/>
            <person name="Nishio T."/>
            <person name="Okada M."/>
            <person name="Plessy C."/>
            <person name="Shibata K."/>
            <person name="Shiraki T."/>
            <person name="Suzuki S."/>
            <person name="Tagami M."/>
            <person name="Waki K."/>
            <person name="Watahiki A."/>
            <person name="Okamura-Oho Y."/>
            <person name="Suzuki H."/>
            <person name="Kawai J."/>
            <person name="Hayashizaki Y."/>
        </authorList>
    </citation>
    <scope>NUCLEOTIDE SEQUENCE [LARGE SCALE MRNA]</scope>
    <source>
        <strain>C57BL/6J</strain>
        <tissue>Pancreas</tissue>
    </source>
</reference>
<reference key="2">
    <citation type="journal article" date="2004" name="Genome Res.">
        <title>The status, quality, and expansion of the NIH full-length cDNA project: the Mammalian Gene Collection (MGC).</title>
        <authorList>
            <consortium name="The MGC Project Team"/>
        </authorList>
    </citation>
    <scope>NUCLEOTIDE SEQUENCE [LARGE SCALE MRNA]</scope>
    <source>
        <strain>FVB/N</strain>
        <tissue>Colon</tissue>
    </source>
</reference>
<reference key="3">
    <citation type="journal article" date="2007" name="Genes Nutr.">
        <title>Dietary modulation and structure prediction of rat mucosal pentraxin (Mptx) protein and loss of function in humans.</title>
        <authorList>
            <person name="van der Meer-van Kraaij C."/>
            <person name="Siezen R."/>
            <person name="Kramer E."/>
            <person name="Reinders M."/>
            <person name="Blokzijl H."/>
            <person name="van der Meer R."/>
            <person name="Keijer J."/>
        </authorList>
    </citation>
    <scope>TISSUE SPECIFICITY</scope>
</reference>
<organism>
    <name type="scientific">Mus musculus</name>
    <name type="common">Mouse</name>
    <dbReference type="NCBI Taxonomy" id="10090"/>
    <lineage>
        <taxon>Eukaryota</taxon>
        <taxon>Metazoa</taxon>
        <taxon>Chordata</taxon>
        <taxon>Craniata</taxon>
        <taxon>Vertebrata</taxon>
        <taxon>Euteleostomi</taxon>
        <taxon>Mammalia</taxon>
        <taxon>Eutheria</taxon>
        <taxon>Euarchontoglires</taxon>
        <taxon>Glires</taxon>
        <taxon>Rodentia</taxon>
        <taxon>Myomorpha</taxon>
        <taxon>Muroidea</taxon>
        <taxon>Muridae</taxon>
        <taxon>Murinae</taxon>
        <taxon>Mus</taxon>
        <taxon>Mus</taxon>
    </lineage>
</organism>
<feature type="signal peptide" evidence="2">
    <location>
        <begin position="1"/>
        <end position="19"/>
    </location>
</feature>
<feature type="chain" id="PRO_0000342393" description="Mucosal pentraxin">
    <location>
        <begin position="20"/>
        <end position="219"/>
    </location>
</feature>
<feature type="domain" description="Pentraxin (PTX)" evidence="3">
    <location>
        <begin position="24"/>
        <end position="219"/>
    </location>
</feature>
<feature type="binding site" evidence="3">
    <location>
        <position position="77"/>
    </location>
    <ligand>
        <name>Ca(2+)</name>
        <dbReference type="ChEBI" id="CHEBI:29108"/>
        <label>1</label>
    </ligand>
</feature>
<feature type="binding site" evidence="3">
    <location>
        <position position="78"/>
    </location>
    <ligand>
        <name>Ca(2+)</name>
        <dbReference type="ChEBI" id="CHEBI:29108"/>
        <label>1</label>
    </ligand>
</feature>
<feature type="binding site" evidence="3">
    <location>
        <position position="155"/>
    </location>
    <ligand>
        <name>Ca(2+)</name>
        <dbReference type="ChEBI" id="CHEBI:29108"/>
        <label>1</label>
    </ligand>
</feature>
<feature type="binding site" evidence="3">
    <location>
        <position position="155"/>
    </location>
    <ligand>
        <name>Ca(2+)</name>
        <dbReference type="ChEBI" id="CHEBI:29108"/>
        <label>2</label>
    </ligand>
</feature>
<feature type="binding site" evidence="3">
    <location>
        <position position="156"/>
    </location>
    <ligand>
        <name>Ca(2+)</name>
        <dbReference type="ChEBI" id="CHEBI:29108"/>
        <label>1</label>
    </ligand>
</feature>
<feature type="binding site" evidence="3">
    <location>
        <position position="157"/>
    </location>
    <ligand>
        <name>Ca(2+)</name>
        <dbReference type="ChEBI" id="CHEBI:29108"/>
        <label>1</label>
    </ligand>
</feature>
<feature type="binding site" evidence="3">
    <location>
        <position position="157"/>
    </location>
    <ligand>
        <name>Ca(2+)</name>
        <dbReference type="ChEBI" id="CHEBI:29108"/>
        <label>2</label>
    </ligand>
</feature>
<feature type="binding site" evidence="3">
    <location>
        <position position="167"/>
    </location>
    <ligand>
        <name>Ca(2+)</name>
        <dbReference type="ChEBI" id="CHEBI:29108"/>
        <label>2</label>
    </ligand>
</feature>
<feature type="glycosylation site" description="N-linked (GlcNAc...) asparagine" evidence="2">
    <location>
        <position position="51"/>
    </location>
</feature>
<feature type="disulfide bond" evidence="3">
    <location>
        <begin position="55"/>
        <end position="114"/>
    </location>
</feature>
<feature type="sequence conflict" description="In Ref. 1; BAB25374." evidence="5" ref="1">
    <original>Q</original>
    <variation>E</variation>
    <location>
        <position position="20"/>
    </location>
</feature>
<feature type="sequence conflict" description="In Ref. 1; BAB25374." evidence="5" ref="1">
    <original>A</original>
    <variation>T</variation>
    <location>
        <position position="58"/>
    </location>
</feature>
<feature type="sequence conflict" description="In Ref. 1; BAB25374." evidence="5" ref="1">
    <original>TK</original>
    <variation>NQ</variation>
    <location>
        <begin position="75"/>
        <end position="76"/>
    </location>
</feature>
<feature type="sequence conflict" description="In Ref. 1; BAB25374." evidence="5" ref="1">
    <original>L</original>
    <variation>M</variation>
    <location>
        <position position="97"/>
    </location>
</feature>
<feature type="sequence conflict" description="In Ref. 1; BAB25374." evidence="5" ref="1">
    <original>I</original>
    <variation>T</variation>
    <location>
        <position position="100"/>
    </location>
</feature>
<feature type="sequence conflict" description="In Ref. 1; BAB25374." evidence="5" ref="1">
    <original>V</original>
    <variation>A</variation>
    <location>
        <position position="111"/>
    </location>
</feature>
<feature type="sequence conflict" description="In Ref. 1; BAB25374." evidence="5" ref="1">
    <original>V</original>
    <variation>G</variation>
    <location>
        <position position="120"/>
    </location>
</feature>
<feature type="sequence conflict" description="In Ref. 1; BAB25374." evidence="5" ref="1">
    <original>N</original>
    <variation>K</variation>
    <location>
        <position position="139"/>
    </location>
</feature>
<feature type="sequence conflict" description="In Ref. 1; BAB25374." evidence="5" ref="1">
    <original>II</original>
    <variation>TL</variation>
    <location>
        <begin position="151"/>
        <end position="152"/>
    </location>
</feature>
<feature type="sequence conflict" description="In Ref. 1; BAB25374." evidence="5" ref="1">
    <original>F</original>
    <variation>Y</variation>
    <location>
        <position position="159"/>
    </location>
</feature>
<feature type="sequence conflict" description="In Ref. 1; BAB25374." evidence="5" ref="1">
    <original>I</original>
    <variation>T</variation>
    <location>
        <position position="213"/>
    </location>
</feature>
<protein>
    <recommendedName>
        <fullName>Mucosal pentraxin</fullName>
    </recommendedName>
</protein>
<keyword id="KW-0106">Calcium</keyword>
<keyword id="KW-1015">Disulfide bond</keyword>
<keyword id="KW-0325">Glycoprotein</keyword>
<keyword id="KW-0479">Metal-binding</keyword>
<keyword id="KW-1185">Reference proteome</keyword>
<keyword id="KW-0964">Secreted</keyword>
<keyword id="KW-0732">Signal</keyword>
<gene>
    <name type="primary">Mptx1</name>
    <name type="synonym">Mptx</name>
</gene>